<sequence>MGSPFILLNYKTYIQGTGKGAVDIAKACKTVSEESGIEIAVAPQLPDIYRVASEVELSVFSQHMDGIGAGSFTGHVFGKCIKEAGAFGTLINHSERRLTLAEIEASLKAAKEFGLRAIICTNNVPTTAAAAALVPDYVAIEPPELIGSGIPVSKADPEVVSGSVEAVSKINPDVKVLCGAGISKGEDLRAALDLGSQGVLLASGIVKASDPKAALEDLIRLV</sequence>
<proteinExistence type="inferred from homology"/>
<keyword id="KW-0963">Cytoplasm</keyword>
<keyword id="KW-0312">Gluconeogenesis</keyword>
<keyword id="KW-0324">Glycolysis</keyword>
<keyword id="KW-0413">Isomerase</keyword>
<reference key="1">
    <citation type="journal article" date="2002" name="J. Mol. Microbiol. Biotechnol.">
        <title>The genome of Methanosarcina mazei: evidence for lateral gene transfer between Bacteria and Archaea.</title>
        <authorList>
            <person name="Deppenmeier U."/>
            <person name="Johann A."/>
            <person name="Hartsch T."/>
            <person name="Merkl R."/>
            <person name="Schmitz R.A."/>
            <person name="Martinez-Arias R."/>
            <person name="Henne A."/>
            <person name="Wiezer A."/>
            <person name="Baeumer S."/>
            <person name="Jacobi C."/>
            <person name="Brueggemann H."/>
            <person name="Lienard T."/>
            <person name="Christmann A."/>
            <person name="Boemecke M."/>
            <person name="Steckel S."/>
            <person name="Bhattacharyya A."/>
            <person name="Lykidis A."/>
            <person name="Overbeek R."/>
            <person name="Klenk H.-P."/>
            <person name="Gunsalus R.P."/>
            <person name="Fritz H.-J."/>
            <person name="Gottschalk G."/>
        </authorList>
    </citation>
    <scope>NUCLEOTIDE SEQUENCE [LARGE SCALE GENOMIC DNA]</scope>
    <source>
        <strain>ATCC BAA-159 / DSM 3647 / Goe1 / Go1 / JCM 11833 / OCM 88</strain>
    </source>
</reference>
<protein>
    <recommendedName>
        <fullName evidence="1">Triosephosphate isomerase</fullName>
        <shortName evidence="1">TIM</shortName>
        <shortName evidence="1">TPI</shortName>
        <ecNumber evidence="1">5.3.1.1</ecNumber>
    </recommendedName>
    <alternativeName>
        <fullName evidence="1">Triose-phosphate isomerase</fullName>
    </alternativeName>
</protein>
<evidence type="ECO:0000255" key="1">
    <source>
        <dbReference type="HAMAP-Rule" id="MF_00147"/>
    </source>
</evidence>
<comment type="function">
    <text evidence="1">Involved in the gluconeogenesis. Catalyzes stereospecifically the conversion of dihydroxyacetone phosphate (DHAP) to D-glyceraldehyde-3-phosphate (G3P).</text>
</comment>
<comment type="catalytic activity">
    <reaction evidence="1">
        <text>D-glyceraldehyde 3-phosphate = dihydroxyacetone phosphate</text>
        <dbReference type="Rhea" id="RHEA:18585"/>
        <dbReference type="ChEBI" id="CHEBI:57642"/>
        <dbReference type="ChEBI" id="CHEBI:59776"/>
        <dbReference type="EC" id="5.3.1.1"/>
    </reaction>
</comment>
<comment type="pathway">
    <text evidence="1">Carbohydrate biosynthesis; gluconeogenesis.</text>
</comment>
<comment type="pathway">
    <text evidence="1">Carbohydrate degradation; glycolysis; D-glyceraldehyde 3-phosphate from glycerone phosphate: step 1/1.</text>
</comment>
<comment type="subunit">
    <text evidence="1">Homotetramer; dimer of dimers.</text>
</comment>
<comment type="subcellular location">
    <subcellularLocation>
        <location evidence="1">Cytoplasm</location>
    </subcellularLocation>
</comment>
<comment type="similarity">
    <text evidence="1">Belongs to the triosephosphate isomerase family.</text>
</comment>
<name>TPIS_METMA</name>
<accession>Q8PXE2</accession>
<dbReference type="EC" id="5.3.1.1" evidence="1"/>
<dbReference type="EMBL" id="AE008384">
    <property type="protein sequence ID" value="AAM30974.1"/>
    <property type="molecule type" value="Genomic_DNA"/>
</dbReference>
<dbReference type="RefSeq" id="WP_011033225.1">
    <property type="nucleotide sequence ID" value="NC_003901.1"/>
</dbReference>
<dbReference type="SMR" id="Q8PXE2"/>
<dbReference type="GeneID" id="82160313"/>
<dbReference type="KEGG" id="mma:MM_1278"/>
<dbReference type="PATRIC" id="fig|192952.21.peg.1485"/>
<dbReference type="eggNOG" id="arCOG01087">
    <property type="taxonomic scope" value="Archaea"/>
</dbReference>
<dbReference type="HOGENOM" id="CLU_104921_0_0_2"/>
<dbReference type="UniPathway" id="UPA00109">
    <property type="reaction ID" value="UER00189"/>
</dbReference>
<dbReference type="UniPathway" id="UPA00138"/>
<dbReference type="Proteomes" id="UP000000595">
    <property type="component" value="Chromosome"/>
</dbReference>
<dbReference type="GO" id="GO:0005737">
    <property type="term" value="C:cytoplasm"/>
    <property type="evidence" value="ECO:0007669"/>
    <property type="project" value="UniProtKB-SubCell"/>
</dbReference>
<dbReference type="GO" id="GO:0004807">
    <property type="term" value="F:triose-phosphate isomerase activity"/>
    <property type="evidence" value="ECO:0007669"/>
    <property type="project" value="UniProtKB-UniRule"/>
</dbReference>
<dbReference type="GO" id="GO:0006094">
    <property type="term" value="P:gluconeogenesis"/>
    <property type="evidence" value="ECO:0007669"/>
    <property type="project" value="UniProtKB-UniRule"/>
</dbReference>
<dbReference type="GO" id="GO:0006096">
    <property type="term" value="P:glycolytic process"/>
    <property type="evidence" value="ECO:0007669"/>
    <property type="project" value="UniProtKB-UniRule"/>
</dbReference>
<dbReference type="CDD" id="cd00311">
    <property type="entry name" value="TIM"/>
    <property type="match status" value="1"/>
</dbReference>
<dbReference type="FunFam" id="3.20.20.70:FF:000223">
    <property type="entry name" value="Triosephosphate isomerase"/>
    <property type="match status" value="1"/>
</dbReference>
<dbReference type="Gene3D" id="3.20.20.70">
    <property type="entry name" value="Aldolase class I"/>
    <property type="match status" value="1"/>
</dbReference>
<dbReference type="HAMAP" id="MF_00147_A">
    <property type="entry name" value="TIM_A"/>
    <property type="match status" value="1"/>
</dbReference>
<dbReference type="InterPro" id="IPR013785">
    <property type="entry name" value="Aldolase_TIM"/>
</dbReference>
<dbReference type="InterPro" id="IPR035990">
    <property type="entry name" value="TIM_sf"/>
</dbReference>
<dbReference type="InterPro" id="IPR000652">
    <property type="entry name" value="Triosephosphate_isomerase"/>
</dbReference>
<dbReference type="InterPro" id="IPR022891">
    <property type="entry name" value="Triosephosphate_isomerase_arc"/>
</dbReference>
<dbReference type="NCBIfam" id="NF003302">
    <property type="entry name" value="PRK04302.1"/>
    <property type="match status" value="1"/>
</dbReference>
<dbReference type="NCBIfam" id="TIGR00419">
    <property type="entry name" value="tim"/>
    <property type="match status" value="1"/>
</dbReference>
<dbReference type="Pfam" id="PF00121">
    <property type="entry name" value="TIM"/>
    <property type="match status" value="1"/>
</dbReference>
<dbReference type="SUPFAM" id="SSF51351">
    <property type="entry name" value="Triosephosphate isomerase (TIM)"/>
    <property type="match status" value="1"/>
</dbReference>
<dbReference type="PROSITE" id="PS51440">
    <property type="entry name" value="TIM_2"/>
    <property type="match status" value="1"/>
</dbReference>
<gene>
    <name evidence="1" type="primary">tpiA</name>
    <name type="ordered locus">MM_1278</name>
</gene>
<organism>
    <name type="scientific">Methanosarcina mazei (strain ATCC BAA-159 / DSM 3647 / Goe1 / Go1 / JCM 11833 / OCM 88)</name>
    <name type="common">Methanosarcina frisia</name>
    <dbReference type="NCBI Taxonomy" id="192952"/>
    <lineage>
        <taxon>Archaea</taxon>
        <taxon>Methanobacteriati</taxon>
        <taxon>Methanobacteriota</taxon>
        <taxon>Stenosarchaea group</taxon>
        <taxon>Methanomicrobia</taxon>
        <taxon>Methanosarcinales</taxon>
        <taxon>Methanosarcinaceae</taxon>
        <taxon>Methanosarcina</taxon>
    </lineage>
</organism>
<feature type="chain" id="PRO_0000090337" description="Triosephosphate isomerase">
    <location>
        <begin position="1"/>
        <end position="222"/>
    </location>
</feature>
<feature type="active site" description="Electrophile" evidence="1">
    <location>
        <position position="93"/>
    </location>
</feature>
<feature type="active site" description="Proton acceptor" evidence="1">
    <location>
        <position position="141"/>
    </location>
</feature>
<feature type="binding site" evidence="1">
    <location>
        <begin position="9"/>
        <end position="11"/>
    </location>
    <ligand>
        <name>substrate</name>
    </ligand>
</feature>
<feature type="binding site" evidence="1">
    <location>
        <position position="146"/>
    </location>
    <ligand>
        <name>substrate</name>
    </ligand>
</feature>
<feature type="binding site" evidence="1">
    <location>
        <position position="181"/>
    </location>
    <ligand>
        <name>substrate</name>
    </ligand>
</feature>
<feature type="binding site" evidence="1">
    <location>
        <begin position="202"/>
        <end position="203"/>
    </location>
    <ligand>
        <name>substrate</name>
    </ligand>
</feature>